<feature type="chain" id="PRO_1000077381" description="Threonine--tRNA ligase">
    <location>
        <begin position="1"/>
        <end position="580"/>
    </location>
</feature>
<feature type="region of interest" description="Catalytic" evidence="1">
    <location>
        <begin position="179"/>
        <end position="476"/>
    </location>
</feature>
<feature type="binding site" evidence="1">
    <location>
        <position position="272"/>
    </location>
    <ligand>
        <name>Zn(2+)</name>
        <dbReference type="ChEBI" id="CHEBI:29105"/>
    </ligand>
</feature>
<feature type="binding site" evidence="1">
    <location>
        <position position="323"/>
    </location>
    <ligand>
        <name>Zn(2+)</name>
        <dbReference type="ChEBI" id="CHEBI:29105"/>
    </ligand>
</feature>
<feature type="binding site" evidence="1">
    <location>
        <position position="453"/>
    </location>
    <ligand>
        <name>Zn(2+)</name>
        <dbReference type="ChEBI" id="CHEBI:29105"/>
    </ligand>
</feature>
<name>SYT_UREP2</name>
<dbReference type="EC" id="6.1.1.3" evidence="1"/>
<dbReference type="EMBL" id="CP000942">
    <property type="protein sequence ID" value="ACA32708.1"/>
    <property type="molecule type" value="Genomic_DNA"/>
</dbReference>
<dbReference type="RefSeq" id="WP_006688784.1">
    <property type="nucleotide sequence ID" value="NC_010503.1"/>
</dbReference>
<dbReference type="SMR" id="B1AJH5"/>
<dbReference type="GeneID" id="29672404"/>
<dbReference type="KEGG" id="upa:UPA3_0572"/>
<dbReference type="HOGENOM" id="CLU_008554_3_1_14"/>
<dbReference type="Proteomes" id="UP000002162">
    <property type="component" value="Chromosome"/>
</dbReference>
<dbReference type="GO" id="GO:0005737">
    <property type="term" value="C:cytoplasm"/>
    <property type="evidence" value="ECO:0007669"/>
    <property type="project" value="UniProtKB-SubCell"/>
</dbReference>
<dbReference type="GO" id="GO:0005524">
    <property type="term" value="F:ATP binding"/>
    <property type="evidence" value="ECO:0007669"/>
    <property type="project" value="UniProtKB-UniRule"/>
</dbReference>
<dbReference type="GO" id="GO:0046872">
    <property type="term" value="F:metal ion binding"/>
    <property type="evidence" value="ECO:0007669"/>
    <property type="project" value="UniProtKB-KW"/>
</dbReference>
<dbReference type="GO" id="GO:0004829">
    <property type="term" value="F:threonine-tRNA ligase activity"/>
    <property type="evidence" value="ECO:0007669"/>
    <property type="project" value="UniProtKB-UniRule"/>
</dbReference>
<dbReference type="GO" id="GO:0000049">
    <property type="term" value="F:tRNA binding"/>
    <property type="evidence" value="ECO:0007669"/>
    <property type="project" value="UniProtKB-KW"/>
</dbReference>
<dbReference type="GO" id="GO:0006435">
    <property type="term" value="P:threonyl-tRNA aminoacylation"/>
    <property type="evidence" value="ECO:0007669"/>
    <property type="project" value="UniProtKB-UniRule"/>
</dbReference>
<dbReference type="CDD" id="cd00860">
    <property type="entry name" value="ThrRS_anticodon"/>
    <property type="match status" value="1"/>
</dbReference>
<dbReference type="CDD" id="cd00771">
    <property type="entry name" value="ThrRS_core"/>
    <property type="match status" value="1"/>
</dbReference>
<dbReference type="FunFam" id="3.30.930.10:FF:000002">
    <property type="entry name" value="Threonine--tRNA ligase"/>
    <property type="match status" value="1"/>
</dbReference>
<dbReference type="FunFam" id="3.40.50.800:FF:000001">
    <property type="entry name" value="Threonine--tRNA ligase"/>
    <property type="match status" value="1"/>
</dbReference>
<dbReference type="FunFam" id="3.30.980.10:FF:000005">
    <property type="entry name" value="Threonyl-tRNA synthetase, mitochondrial"/>
    <property type="match status" value="1"/>
</dbReference>
<dbReference type="Gene3D" id="3.30.54.20">
    <property type="match status" value="1"/>
</dbReference>
<dbReference type="Gene3D" id="3.40.50.800">
    <property type="entry name" value="Anticodon-binding domain"/>
    <property type="match status" value="1"/>
</dbReference>
<dbReference type="Gene3D" id="3.30.930.10">
    <property type="entry name" value="Bira Bifunctional Protein, Domain 2"/>
    <property type="match status" value="1"/>
</dbReference>
<dbReference type="Gene3D" id="3.30.980.10">
    <property type="entry name" value="Threonyl-trna Synthetase, Chain A, domain 2"/>
    <property type="match status" value="1"/>
</dbReference>
<dbReference type="HAMAP" id="MF_00184">
    <property type="entry name" value="Thr_tRNA_synth"/>
    <property type="match status" value="1"/>
</dbReference>
<dbReference type="InterPro" id="IPR002314">
    <property type="entry name" value="aa-tRNA-synt_IIb"/>
</dbReference>
<dbReference type="InterPro" id="IPR006195">
    <property type="entry name" value="aa-tRNA-synth_II"/>
</dbReference>
<dbReference type="InterPro" id="IPR045864">
    <property type="entry name" value="aa-tRNA-synth_II/BPL/LPL"/>
</dbReference>
<dbReference type="InterPro" id="IPR004154">
    <property type="entry name" value="Anticodon-bd"/>
</dbReference>
<dbReference type="InterPro" id="IPR036621">
    <property type="entry name" value="Anticodon-bd_dom_sf"/>
</dbReference>
<dbReference type="InterPro" id="IPR002320">
    <property type="entry name" value="Thr-tRNA-ligase_IIa"/>
</dbReference>
<dbReference type="InterPro" id="IPR018163">
    <property type="entry name" value="Thr/Ala-tRNA-synth_IIc_edit"/>
</dbReference>
<dbReference type="InterPro" id="IPR047246">
    <property type="entry name" value="ThrRS_anticodon"/>
</dbReference>
<dbReference type="InterPro" id="IPR033728">
    <property type="entry name" value="ThrRS_core"/>
</dbReference>
<dbReference type="InterPro" id="IPR012947">
    <property type="entry name" value="tRNA_SAD"/>
</dbReference>
<dbReference type="NCBIfam" id="TIGR00418">
    <property type="entry name" value="thrS"/>
    <property type="match status" value="1"/>
</dbReference>
<dbReference type="PANTHER" id="PTHR11451:SF56">
    <property type="entry name" value="THREONINE--TRNA LIGASE 1"/>
    <property type="match status" value="1"/>
</dbReference>
<dbReference type="PANTHER" id="PTHR11451">
    <property type="entry name" value="THREONINE-TRNA LIGASE"/>
    <property type="match status" value="1"/>
</dbReference>
<dbReference type="Pfam" id="PF03129">
    <property type="entry name" value="HGTP_anticodon"/>
    <property type="match status" value="1"/>
</dbReference>
<dbReference type="Pfam" id="PF00587">
    <property type="entry name" value="tRNA-synt_2b"/>
    <property type="match status" value="1"/>
</dbReference>
<dbReference type="Pfam" id="PF07973">
    <property type="entry name" value="tRNA_SAD"/>
    <property type="match status" value="1"/>
</dbReference>
<dbReference type="PRINTS" id="PR01047">
    <property type="entry name" value="TRNASYNTHTHR"/>
</dbReference>
<dbReference type="SMART" id="SM00863">
    <property type="entry name" value="tRNA_SAD"/>
    <property type="match status" value="1"/>
</dbReference>
<dbReference type="SUPFAM" id="SSF52954">
    <property type="entry name" value="Class II aaRS ABD-related"/>
    <property type="match status" value="1"/>
</dbReference>
<dbReference type="SUPFAM" id="SSF55681">
    <property type="entry name" value="Class II aaRS and biotin synthetases"/>
    <property type="match status" value="1"/>
</dbReference>
<dbReference type="SUPFAM" id="SSF55186">
    <property type="entry name" value="ThrRS/AlaRS common domain"/>
    <property type="match status" value="1"/>
</dbReference>
<dbReference type="PROSITE" id="PS50862">
    <property type="entry name" value="AA_TRNA_LIGASE_II"/>
    <property type="match status" value="1"/>
</dbReference>
<reference key="1">
    <citation type="submission" date="2008-02" db="EMBL/GenBank/DDBJ databases">
        <title>Genome sequence of Ureaplasma parvum serovar 3.</title>
        <authorList>
            <person name="Methe B.A."/>
            <person name="Glass J."/>
            <person name="Waites K."/>
            <person name="Shrivastava S."/>
        </authorList>
    </citation>
    <scope>NUCLEOTIDE SEQUENCE [LARGE SCALE GENOMIC DNA]</scope>
    <source>
        <strain>ATCC 27815 / 27 / NCTC 11736</strain>
    </source>
</reference>
<protein>
    <recommendedName>
        <fullName evidence="1">Threonine--tRNA ligase</fullName>
        <ecNumber evidence="1">6.1.1.3</ecNumber>
    </recommendedName>
    <alternativeName>
        <fullName evidence="1">Threonyl-tRNA synthetase</fullName>
        <shortName evidence="1">ThrRS</shortName>
    </alternativeName>
</protein>
<organism>
    <name type="scientific">Ureaplasma parvum serovar 3 (strain ATCC 27815 / 27 / NCTC 11736)</name>
    <dbReference type="NCBI Taxonomy" id="505682"/>
    <lineage>
        <taxon>Bacteria</taxon>
        <taxon>Bacillati</taxon>
        <taxon>Mycoplasmatota</taxon>
        <taxon>Mycoplasmoidales</taxon>
        <taxon>Mycoplasmoidaceae</taxon>
        <taxon>Ureaplasma</taxon>
    </lineage>
</organism>
<keyword id="KW-0030">Aminoacyl-tRNA synthetase</keyword>
<keyword id="KW-0067">ATP-binding</keyword>
<keyword id="KW-0963">Cytoplasm</keyword>
<keyword id="KW-0436">Ligase</keyword>
<keyword id="KW-0479">Metal-binding</keyword>
<keyword id="KW-0547">Nucleotide-binding</keyword>
<keyword id="KW-0648">Protein biosynthesis</keyword>
<keyword id="KW-0694">RNA-binding</keyword>
<keyword id="KW-0820">tRNA-binding</keyword>
<keyword id="KW-0862">Zinc</keyword>
<accession>B1AJH5</accession>
<comment type="function">
    <text evidence="1">Catalyzes the attachment of threonine to tRNA(Thr) in a two-step reaction: L-threonine is first activated by ATP to form Thr-AMP and then transferred to the acceptor end of tRNA(Thr). Also edits incorrectly charged L-seryl-tRNA(Thr).</text>
</comment>
<comment type="catalytic activity">
    <reaction evidence="1">
        <text>tRNA(Thr) + L-threonine + ATP = L-threonyl-tRNA(Thr) + AMP + diphosphate + H(+)</text>
        <dbReference type="Rhea" id="RHEA:24624"/>
        <dbReference type="Rhea" id="RHEA-COMP:9670"/>
        <dbReference type="Rhea" id="RHEA-COMP:9704"/>
        <dbReference type="ChEBI" id="CHEBI:15378"/>
        <dbReference type="ChEBI" id="CHEBI:30616"/>
        <dbReference type="ChEBI" id="CHEBI:33019"/>
        <dbReference type="ChEBI" id="CHEBI:57926"/>
        <dbReference type="ChEBI" id="CHEBI:78442"/>
        <dbReference type="ChEBI" id="CHEBI:78534"/>
        <dbReference type="ChEBI" id="CHEBI:456215"/>
        <dbReference type="EC" id="6.1.1.3"/>
    </reaction>
</comment>
<comment type="cofactor">
    <cofactor evidence="1">
        <name>Zn(2+)</name>
        <dbReference type="ChEBI" id="CHEBI:29105"/>
    </cofactor>
    <text evidence="1">Binds 1 zinc ion per subunit.</text>
</comment>
<comment type="subunit">
    <text evidence="1">Homodimer.</text>
</comment>
<comment type="subcellular location">
    <subcellularLocation>
        <location evidence="1">Cytoplasm</location>
    </subcellularLocation>
</comment>
<comment type="similarity">
    <text evidence="1">Belongs to the class-II aminoacyl-tRNA synthetase family.</text>
</comment>
<sequence>MYKFDQKLNHSAAHLLAMALTKFYPNLSLAIGPTIDEGFYYDFNLNDPNTSITPLDLLKIEKEMKKITTQALTFDYEQVTYEKAKELFKHNKYKLDIIEQNKNNSLSIYHSGKWFDLCKGPHVQNTKEIKAIKLLNIAGSYWRGDANNDQLIRIYGVAFSDQDQLDAYLKDLQERKERDHRKIGKDLNLFTFNNLAGQGLPIWLPNGTIIKNQVQKFINEVEFQFNFDTVITPILGSIDLYKTSGHWDHYKDNIFSPVQIDNEILVLRPMTCPHHTLVYSNELRSYRSLPIRLSEHSILHRYESSGGLTGFERVREMILEDCHVFCRFDQIEHEVINAFKMIQEAQEGLGIKTFEIHLSLNDPNDKEKYYDDPQMWEQSQNVLRKMLKDHNIPYKEMVGEAAFYGPKIDFQVKTVLNRIITVSTIQLDFLLPNRFNLTYINESNEQSVPVMIHIGIIGTYERLLAILLEQTKGILPLWLSPIQVVIIPVNENLHTDYVKELNIKLRKHLIRSNVDLRNERLSKKIREAQIQKIPYQIVIGDEEIKNNKMVTYRCYGSEKTTTVSITDFINMLENKIRLKK</sequence>
<gene>
    <name evidence="1" type="primary">thrS</name>
    <name type="ordered locus">UPA3_0572</name>
</gene>
<proteinExistence type="inferred from homology"/>
<evidence type="ECO:0000255" key="1">
    <source>
        <dbReference type="HAMAP-Rule" id="MF_00184"/>
    </source>
</evidence>